<proteinExistence type="inferred from homology"/>
<sequence length="342" mass="38981">MDLTERHKRILKALVDEFIQENRPVGSKTLFDKHDIGLSPASIRTVLKDLEDYGYLASKHTSGGRIPTERGYRFYVDSLVILYELTLKEKQRIQQEYLKMQFKLDQILKATASVLSSLSNAAGIVIGPAKNLDTLKHLELIHVRGDEILMILVMRSGTVLHRNIFVDRNYSQEALYQVSKYLNDNLKGYDIYEIQNVVVPNLMVRRDGPEDFTRIAELLSSAMNPDNSEVTLYIDGFKNLYANFRDEEQQLSQVLSLLDDQGFLKEFFSEYIDQDGVYTIIGKDGNRSMSGVSIITSNYKMGEKKIGALGIIGPQRMDYNRALPLVDFTSKLVSEMVTRISK</sequence>
<accession>Q04VD0</accession>
<evidence type="ECO:0000255" key="1">
    <source>
        <dbReference type="HAMAP-Rule" id="MF_00081"/>
    </source>
</evidence>
<gene>
    <name evidence="1" type="primary">hrcA</name>
    <name type="ordered locus">LBJ_0431</name>
</gene>
<name>HRCA_LEPBJ</name>
<organism>
    <name type="scientific">Leptospira borgpetersenii serovar Hardjo-bovis (strain JB197)</name>
    <dbReference type="NCBI Taxonomy" id="355277"/>
    <lineage>
        <taxon>Bacteria</taxon>
        <taxon>Pseudomonadati</taxon>
        <taxon>Spirochaetota</taxon>
        <taxon>Spirochaetia</taxon>
        <taxon>Leptospirales</taxon>
        <taxon>Leptospiraceae</taxon>
        <taxon>Leptospira</taxon>
    </lineage>
</organism>
<protein>
    <recommendedName>
        <fullName evidence="1">Heat-inducible transcription repressor HrcA</fullName>
    </recommendedName>
</protein>
<keyword id="KW-0678">Repressor</keyword>
<keyword id="KW-0346">Stress response</keyword>
<keyword id="KW-0804">Transcription</keyword>
<keyword id="KW-0805">Transcription regulation</keyword>
<comment type="function">
    <text evidence="1">Negative regulator of class I heat shock genes (grpE-dnaK-dnaJ and groELS operons). Prevents heat-shock induction of these operons.</text>
</comment>
<comment type="similarity">
    <text evidence="1">Belongs to the HrcA family.</text>
</comment>
<feature type="chain" id="PRO_1000010417" description="Heat-inducible transcription repressor HrcA">
    <location>
        <begin position="1"/>
        <end position="342"/>
    </location>
</feature>
<dbReference type="EMBL" id="CP000350">
    <property type="protein sequence ID" value="ABJ75140.1"/>
    <property type="molecule type" value="Genomic_DNA"/>
</dbReference>
<dbReference type="RefSeq" id="WP_002754054.1">
    <property type="nucleotide sequence ID" value="NC_008510.1"/>
</dbReference>
<dbReference type="SMR" id="Q04VD0"/>
<dbReference type="KEGG" id="lbj:LBJ_0431"/>
<dbReference type="HOGENOM" id="CLU_050019_1_0_12"/>
<dbReference type="Proteomes" id="UP000000656">
    <property type="component" value="Chromosome 1"/>
</dbReference>
<dbReference type="GO" id="GO:0003677">
    <property type="term" value="F:DNA binding"/>
    <property type="evidence" value="ECO:0007669"/>
    <property type="project" value="InterPro"/>
</dbReference>
<dbReference type="GO" id="GO:0045892">
    <property type="term" value="P:negative regulation of DNA-templated transcription"/>
    <property type="evidence" value="ECO:0007669"/>
    <property type="project" value="UniProtKB-UniRule"/>
</dbReference>
<dbReference type="FunFam" id="1.10.10.10:FF:000450">
    <property type="entry name" value="Heat-inducible transcription repressor HrcA"/>
    <property type="match status" value="1"/>
</dbReference>
<dbReference type="Gene3D" id="3.30.450.40">
    <property type="match status" value="1"/>
</dbReference>
<dbReference type="Gene3D" id="3.30.390.60">
    <property type="entry name" value="Heat-inducible transcription repressor hrca homolog, domain 3"/>
    <property type="match status" value="1"/>
</dbReference>
<dbReference type="Gene3D" id="1.10.10.10">
    <property type="entry name" value="Winged helix-like DNA-binding domain superfamily/Winged helix DNA-binding domain"/>
    <property type="match status" value="1"/>
</dbReference>
<dbReference type="HAMAP" id="MF_00081">
    <property type="entry name" value="HrcA"/>
    <property type="match status" value="1"/>
</dbReference>
<dbReference type="InterPro" id="IPR029016">
    <property type="entry name" value="GAF-like_dom_sf"/>
</dbReference>
<dbReference type="InterPro" id="IPR002571">
    <property type="entry name" value="HrcA"/>
</dbReference>
<dbReference type="InterPro" id="IPR021153">
    <property type="entry name" value="HrcA_C"/>
</dbReference>
<dbReference type="InterPro" id="IPR036388">
    <property type="entry name" value="WH-like_DNA-bd_sf"/>
</dbReference>
<dbReference type="InterPro" id="IPR036390">
    <property type="entry name" value="WH_DNA-bd_sf"/>
</dbReference>
<dbReference type="InterPro" id="IPR023120">
    <property type="entry name" value="WHTH_transcript_rep_HrcA_IDD"/>
</dbReference>
<dbReference type="NCBIfam" id="TIGR00331">
    <property type="entry name" value="hrcA"/>
    <property type="match status" value="1"/>
</dbReference>
<dbReference type="PANTHER" id="PTHR34824">
    <property type="entry name" value="HEAT-INDUCIBLE TRANSCRIPTION REPRESSOR HRCA"/>
    <property type="match status" value="1"/>
</dbReference>
<dbReference type="PANTHER" id="PTHR34824:SF1">
    <property type="entry name" value="HEAT-INDUCIBLE TRANSCRIPTION REPRESSOR HRCA"/>
    <property type="match status" value="1"/>
</dbReference>
<dbReference type="Pfam" id="PF01628">
    <property type="entry name" value="HrcA"/>
    <property type="match status" value="1"/>
</dbReference>
<dbReference type="PIRSF" id="PIRSF005485">
    <property type="entry name" value="HrcA"/>
    <property type="match status" value="1"/>
</dbReference>
<dbReference type="SUPFAM" id="SSF55781">
    <property type="entry name" value="GAF domain-like"/>
    <property type="match status" value="1"/>
</dbReference>
<dbReference type="SUPFAM" id="SSF46785">
    <property type="entry name" value="Winged helix' DNA-binding domain"/>
    <property type="match status" value="1"/>
</dbReference>
<reference key="1">
    <citation type="journal article" date="2006" name="Proc. Natl. Acad. Sci. U.S.A.">
        <title>Genome reduction in Leptospira borgpetersenii reflects limited transmission potential.</title>
        <authorList>
            <person name="Bulach D.M."/>
            <person name="Zuerner R.L."/>
            <person name="Wilson P."/>
            <person name="Seemann T."/>
            <person name="McGrath A."/>
            <person name="Cullen P.A."/>
            <person name="Davis J."/>
            <person name="Johnson M."/>
            <person name="Kuczek E."/>
            <person name="Alt D.P."/>
            <person name="Peterson-Burch B."/>
            <person name="Coppel R.L."/>
            <person name="Rood J.I."/>
            <person name="Davies J.K."/>
            <person name="Adler B."/>
        </authorList>
    </citation>
    <scope>NUCLEOTIDE SEQUENCE [LARGE SCALE GENOMIC DNA]</scope>
    <source>
        <strain>JB197</strain>
    </source>
</reference>